<feature type="chain" id="PRO_0000442344" description="Suppressor of zyg-1 protein 20" evidence="7">
    <location>
        <begin position="1"/>
        <end position="558"/>
    </location>
</feature>
<feature type="domain" description="SUZ" evidence="1">
    <location>
        <begin position="45"/>
        <end position="146"/>
    </location>
</feature>
<feature type="region of interest" description="Disordered" evidence="2">
    <location>
        <begin position="50"/>
        <end position="132"/>
    </location>
</feature>
<feature type="region of interest" description="Disordered" evidence="2">
    <location>
        <begin position="205"/>
        <end position="241"/>
    </location>
</feature>
<feature type="region of interest" description="Disordered" evidence="2">
    <location>
        <begin position="374"/>
        <end position="558"/>
    </location>
</feature>
<feature type="compositionally biased region" description="Basic and acidic residues" evidence="2">
    <location>
        <begin position="69"/>
        <end position="81"/>
    </location>
</feature>
<feature type="compositionally biased region" description="Polar residues" evidence="2">
    <location>
        <begin position="94"/>
        <end position="109"/>
    </location>
</feature>
<feature type="compositionally biased region" description="Basic and acidic residues" evidence="2">
    <location>
        <begin position="117"/>
        <end position="131"/>
    </location>
</feature>
<feature type="compositionally biased region" description="Low complexity" evidence="2">
    <location>
        <begin position="374"/>
        <end position="394"/>
    </location>
</feature>
<feature type="compositionally biased region" description="Low complexity" evidence="2">
    <location>
        <begin position="424"/>
        <end position="477"/>
    </location>
</feature>
<feature type="compositionally biased region" description="Polar residues" evidence="2">
    <location>
        <begin position="478"/>
        <end position="508"/>
    </location>
</feature>
<feature type="compositionally biased region" description="Polar residues" evidence="2">
    <location>
        <begin position="545"/>
        <end position="558"/>
    </location>
</feature>
<feature type="splice variant" id="VSP_059230" description="In isoform e." evidence="7">
    <location>
        <begin position="207"/>
        <end position="307"/>
    </location>
</feature>
<feature type="mutagenesis site" description="Reduced RNA binding." evidence="3">
    <original>RNR</original>
    <variation>GNG</variation>
    <location>
        <begin position="138"/>
        <end position="140"/>
    </location>
</feature>
<feature type="sequence conflict" description="In Ref. 1; ABQ41320." evidence="7" ref="1">
    <original>P</original>
    <variation>L</variation>
    <location>
        <position position="234"/>
    </location>
</feature>
<evidence type="ECO:0000255" key="1">
    <source>
        <dbReference type="PROSITE-ProRule" id="PRU01009"/>
    </source>
</evidence>
<evidence type="ECO:0000256" key="2">
    <source>
        <dbReference type="SAM" id="MobiDB-lite"/>
    </source>
</evidence>
<evidence type="ECO:0000269" key="3">
    <source>
    </source>
</evidence>
<evidence type="ECO:0000269" key="4">
    <source>
    </source>
</evidence>
<evidence type="ECO:0000269" key="5">
    <source>
    </source>
</evidence>
<evidence type="ECO:0000303" key="6">
    <source>
    </source>
</evidence>
<evidence type="ECO:0000305" key="7"/>
<evidence type="ECO:0000312" key="8">
    <source>
        <dbReference type="Proteomes" id="UP000001940"/>
    </source>
</evidence>
<evidence type="ECO:0000312" key="9">
    <source>
        <dbReference type="WormBase" id="C18E9.3e"/>
    </source>
</evidence>
<evidence type="ECO:0000312" key="10">
    <source>
        <dbReference type="WormBase" id="C18E9.3f"/>
    </source>
</evidence>
<organism evidence="8">
    <name type="scientific">Caenorhabditis elegans</name>
    <dbReference type="NCBI Taxonomy" id="6239"/>
    <lineage>
        <taxon>Eukaryota</taxon>
        <taxon>Metazoa</taxon>
        <taxon>Ecdysozoa</taxon>
        <taxon>Nematoda</taxon>
        <taxon>Chromadorea</taxon>
        <taxon>Rhabditida</taxon>
        <taxon>Rhabditina</taxon>
        <taxon>Rhabditomorpha</taxon>
        <taxon>Rhabditoidea</taxon>
        <taxon>Rhabditidae</taxon>
        <taxon>Peloderinae</taxon>
        <taxon>Caenorhabditis</taxon>
    </lineage>
</organism>
<dbReference type="EMBL" id="EF100714">
    <property type="protein sequence ID" value="ABQ41319.1"/>
    <property type="molecule type" value="mRNA"/>
</dbReference>
<dbReference type="EMBL" id="EF100715">
    <property type="protein sequence ID" value="ABQ41320.1"/>
    <property type="molecule type" value="mRNA"/>
</dbReference>
<dbReference type="EMBL" id="EF100716">
    <property type="protein sequence ID" value="ABQ41321.1"/>
    <property type="molecule type" value="mRNA"/>
</dbReference>
<dbReference type="EMBL" id="EF656060">
    <property type="protein sequence ID" value="ABV23716.1"/>
    <property type="molecule type" value="mRNA"/>
</dbReference>
<dbReference type="EMBL" id="EF656061">
    <property type="protein sequence ID" value="ABV23717.1"/>
    <property type="molecule type" value="mRNA"/>
</dbReference>
<dbReference type="EMBL" id="BX284602">
    <property type="protein sequence ID" value="CAQ58414.1"/>
    <property type="molecule type" value="Genomic_DNA"/>
</dbReference>
<dbReference type="EMBL" id="BX284602">
    <property type="protein sequence ID" value="CBI68022.1"/>
    <property type="molecule type" value="Genomic_DNA"/>
</dbReference>
<dbReference type="RefSeq" id="NP_001129808.1">
    <molecule id="G5EGU9-2"/>
    <property type="nucleotide sequence ID" value="NM_001136336.3"/>
</dbReference>
<dbReference type="RefSeq" id="NP_001254187.1">
    <molecule id="G5EGU9-1"/>
    <property type="nucleotide sequence ID" value="NM_001267258.3"/>
</dbReference>
<dbReference type="SMR" id="G5EGU9"/>
<dbReference type="FunCoup" id="G5EGU9">
    <property type="interactions" value="638"/>
</dbReference>
<dbReference type="IntAct" id="G5EGU9">
    <property type="interactions" value="1"/>
</dbReference>
<dbReference type="STRING" id="6239.C18E9.3d.1"/>
<dbReference type="PaxDb" id="6239-C18E9.3a"/>
<dbReference type="EnsemblMetazoa" id="C18E9.3e.1">
    <molecule id="G5EGU9-2"/>
    <property type="protein sequence ID" value="C18E9.3e.1"/>
    <property type="gene ID" value="WBGene00004105"/>
</dbReference>
<dbReference type="EnsemblMetazoa" id="C18E9.3f.1">
    <molecule id="G5EGU9-1"/>
    <property type="protein sequence ID" value="C18E9.3f.1"/>
    <property type="gene ID" value="WBGene00004105"/>
</dbReference>
<dbReference type="GeneID" id="174430"/>
<dbReference type="KEGG" id="cel:CELE_C18E9.3"/>
<dbReference type="AGR" id="WB:WBGene00004105"/>
<dbReference type="CTD" id="174430"/>
<dbReference type="WormBase" id="C18E9.3e">
    <molecule id="G5EGU9-2"/>
    <property type="protein sequence ID" value="CE42669"/>
    <property type="gene ID" value="WBGene00004105"/>
    <property type="gene designation" value="szy-20"/>
</dbReference>
<dbReference type="WormBase" id="C18E9.3f">
    <molecule id="G5EGU9-1"/>
    <property type="protein sequence ID" value="CE38277"/>
    <property type="gene ID" value="WBGene00004105"/>
    <property type="gene designation" value="szy-20"/>
</dbReference>
<dbReference type="eggNOG" id="ENOG502TH1G">
    <property type="taxonomic scope" value="Eukaryota"/>
</dbReference>
<dbReference type="InParanoid" id="G5EGU9"/>
<dbReference type="OrthoDB" id="5373615at2759"/>
<dbReference type="PRO" id="PR:G5EGU9"/>
<dbReference type="Proteomes" id="UP000001940">
    <property type="component" value="Chromosome II"/>
</dbReference>
<dbReference type="Bgee" id="WBGene00004105">
    <property type="expression patterns" value="Expressed in germ line (C elegans) and 4 other cell types or tissues"/>
</dbReference>
<dbReference type="ExpressionAtlas" id="G5EGU9">
    <property type="expression patterns" value="baseline and differential"/>
</dbReference>
<dbReference type="GO" id="GO:0005814">
    <property type="term" value="C:centriole"/>
    <property type="evidence" value="ECO:0007669"/>
    <property type="project" value="UniProtKB-SubCell"/>
</dbReference>
<dbReference type="GO" id="GO:0005813">
    <property type="term" value="C:centrosome"/>
    <property type="evidence" value="ECO:0000314"/>
    <property type="project" value="WormBase"/>
</dbReference>
<dbReference type="GO" id="GO:0005694">
    <property type="term" value="C:chromosome"/>
    <property type="evidence" value="ECO:0007669"/>
    <property type="project" value="UniProtKB-SubCell"/>
</dbReference>
<dbReference type="GO" id="GO:0005737">
    <property type="term" value="C:cytoplasm"/>
    <property type="evidence" value="ECO:0000314"/>
    <property type="project" value="UniProtKB"/>
</dbReference>
<dbReference type="GO" id="GO:0005730">
    <property type="term" value="C:nucleolus"/>
    <property type="evidence" value="ECO:0000314"/>
    <property type="project" value="WormBase"/>
</dbReference>
<dbReference type="GO" id="GO:0005634">
    <property type="term" value="C:nucleus"/>
    <property type="evidence" value="ECO:0000314"/>
    <property type="project" value="WormBase"/>
</dbReference>
<dbReference type="GO" id="GO:0003723">
    <property type="term" value="F:RNA binding"/>
    <property type="evidence" value="ECO:0007669"/>
    <property type="project" value="UniProtKB-KW"/>
</dbReference>
<dbReference type="GO" id="GO:0051301">
    <property type="term" value="P:cell division"/>
    <property type="evidence" value="ECO:0000315"/>
    <property type="project" value="WormBase"/>
</dbReference>
<dbReference type="GO" id="GO:0009792">
    <property type="term" value="P:embryo development ending in birth or egg hatching"/>
    <property type="evidence" value="ECO:0000315"/>
    <property type="project" value="WormBase"/>
</dbReference>
<dbReference type="GO" id="GO:0045132">
    <property type="term" value="P:meiotic chromosome segregation"/>
    <property type="evidence" value="ECO:0000315"/>
    <property type="project" value="WormBase"/>
</dbReference>
<dbReference type="GO" id="GO:1904780">
    <property type="term" value="P:negative regulation of protein localization to centrosome"/>
    <property type="evidence" value="ECO:0000315"/>
    <property type="project" value="UniProtKB"/>
</dbReference>
<dbReference type="GO" id="GO:1905516">
    <property type="term" value="P:positive regulation of fertilization"/>
    <property type="evidence" value="ECO:0000316"/>
    <property type="project" value="UniProtKB"/>
</dbReference>
<dbReference type="GO" id="GO:0045977">
    <property type="term" value="P:positive regulation of mitotic cell cycle, embryonic"/>
    <property type="evidence" value="ECO:0000315"/>
    <property type="project" value="UniProtKB"/>
</dbReference>
<dbReference type="GO" id="GO:1903438">
    <property type="term" value="P:positive regulation of mitotic cytokinetic process"/>
    <property type="evidence" value="ECO:0000315"/>
    <property type="project" value="UniProtKB"/>
</dbReference>
<dbReference type="GO" id="GO:0010824">
    <property type="term" value="P:regulation of centrosome duplication"/>
    <property type="evidence" value="ECO:0000316"/>
    <property type="project" value="WormBase"/>
</dbReference>
<dbReference type="GO" id="GO:0009794">
    <property type="term" value="P:regulation of mitotic cell cycle, embryonic"/>
    <property type="evidence" value="ECO:0000316"/>
    <property type="project" value="UniProtKB"/>
</dbReference>
<dbReference type="GO" id="GO:1903436">
    <property type="term" value="P:regulation of mitotic cytokinetic process"/>
    <property type="evidence" value="ECO:0000316"/>
    <property type="project" value="UniProtKB"/>
</dbReference>
<dbReference type="GO" id="GO:0090169">
    <property type="term" value="P:regulation of spindle assembly"/>
    <property type="evidence" value="ECO:0000316"/>
    <property type="project" value="UniProtKB"/>
</dbReference>
<dbReference type="InterPro" id="IPR024771">
    <property type="entry name" value="SUZ"/>
</dbReference>
<dbReference type="Pfam" id="PF12752">
    <property type="entry name" value="SUZ"/>
    <property type="match status" value="1"/>
</dbReference>
<dbReference type="PROSITE" id="PS51673">
    <property type="entry name" value="SUZ"/>
    <property type="match status" value="1"/>
</dbReference>
<comment type="function">
    <text evidence="3 5">RNA binding protein that is required for normal cell division and cytokinesis during embryonic development (PubMed:19081077, PubMed:27689799). Functions with RNA-binding protein atx-2 to ensure embryonic cell division, and to this end, plays a role in the regulation of centrosome assembly, position and size, and in astral microtubule outgrowth and nucleation (PubMed:19081077, PubMed:27689799). Furthermore, negatively regulates the levels of the protein kinase zyg-1 at the centrosome (PubMed:19081077, PubMed:27689799). Also involved in ensuring centrosome attachment to the nuclear envelope (PubMed:19081077).</text>
</comment>
<comment type="subunit">
    <text evidence="4 5">Interacts (via C-terminus) with atx-2 (via C-terminus); the interaction is RNA independent (PubMed:27689799). Interacts with let-92 (PubMed:21497766).</text>
</comment>
<comment type="subcellular location">
    <subcellularLocation>
        <location evidence="5">Cytoplasm</location>
    </subcellularLocation>
    <text evidence="5">Co-localizes with atx-2 in the cytoplasm.</text>
</comment>
<comment type="subcellular location">
    <molecule>Isoform f</molecule>
    <subcellularLocation>
        <location evidence="3">Cytoplasm</location>
    </subcellularLocation>
    <subcellularLocation>
        <location evidence="3">Cytoplasm</location>
        <location evidence="3">Cytoskeleton</location>
        <location evidence="3">Microtubule organizing center</location>
        <location evidence="3">Centrosome</location>
    </subcellularLocation>
    <subcellularLocation>
        <location evidence="3">Cytoplasm</location>
        <location evidence="3">Cytoskeleton</location>
        <location evidence="3">Microtubule organizing center</location>
        <location evidence="3">Centrosome</location>
        <location evidence="3">Centriole</location>
    </subcellularLocation>
    <subcellularLocation>
        <location evidence="3">Nucleus</location>
        <location evidence="3">Nucleolus</location>
    </subcellularLocation>
    <subcellularLocation>
        <location evidence="3">Chromosome</location>
    </subcellularLocation>
    <text evidence="3">Co-localizes with sas-4 at centrioles. Localizes to nucleoli during interphase and to the surface of chromosomes during meiosis and mitosis. Localizes in puncta adjacent to the male pronucleus at the centrosome during meiosis. Localization at the centrosome peaks at prometaphase and metaphase, but then decreases and expression is at its most minimal during interphase.</text>
</comment>
<comment type="alternative products">
    <event type="alternative splicing"/>
    <isoform>
        <id>G5EGU9-1</id>
        <name evidence="10">f</name>
        <name evidence="6">a</name>
        <sequence type="displayed"/>
    </isoform>
    <isoform>
        <id>G5EGU9-2</id>
        <name evidence="9">e</name>
        <name evidence="6">b</name>
        <sequence type="described" ref="VSP_059230"/>
    </isoform>
</comment>
<comment type="developmental stage">
    <text evidence="3">Expressed during embryonic development.</text>
</comment>
<comment type="domain">
    <text evidence="5">The C-terminal part is necessary for interaction with atx-2.</text>
</comment>
<comment type="domain">
    <text evidence="3">The SUZ domain is necessary for RNA binding.</text>
</comment>
<comment type="PTM">
    <text evidence="4">Phosphorylated. May be dephosphorylated by let-92.</text>
</comment>
<comment type="disruption phenotype">
    <text evidence="3">Temperature-sensitive with embryonic lethality at 25 degrees Celsius. RNAi-mediated knockdown results in 10% embryonic lethality at 20 degrees Celsius and 90% embryonic lethality at 25 degrees Celsius due to cell division and cytokinesis defects including centrosome duplication and attachment defects, and failed bipolar spindle formation in embryos. RNAi-mediated knockdown in a zyg-20 (it25) mutant background results in suppression of the embryonic lethality phenotype in the zyg-1 single mutant at 24 degrees Celsius.</text>
</comment>
<keyword id="KW-0025">Alternative splicing</keyword>
<keyword id="KW-0131">Cell cycle</keyword>
<keyword id="KW-0132">Cell division</keyword>
<keyword id="KW-0158">Chromosome</keyword>
<keyword id="KW-0963">Cytoplasm</keyword>
<keyword id="KW-0206">Cytoskeleton</keyword>
<keyword id="KW-0539">Nucleus</keyword>
<keyword id="KW-0597">Phosphoprotein</keyword>
<keyword id="KW-1185">Reference proteome</keyword>
<keyword id="KW-0694">RNA-binding</keyword>
<reference evidence="7" key="1">
    <citation type="journal article" date="2008" name="Dev. Cell">
        <title>The conserved protein SZY-20 opposes the Plk4-related kinase ZYG-1 to limit centrosome size.</title>
        <authorList>
            <person name="Song M.H."/>
            <person name="Aravind L."/>
            <person name="Mueller-Reichert T."/>
            <person name="O'Connell K.F."/>
        </authorList>
    </citation>
    <scope>NUCLEOTIDE SEQUENCE [MRNA] (ISOFORMS F AND E)</scope>
    <scope>FUNCTION</scope>
    <scope>SUBCELLULAR LOCATION (ISOFORM F)</scope>
    <scope>DEVELOPMENTAL STAGE</scope>
    <scope>DOMAIN</scope>
    <scope>DISRUPTION PHENOTYPE</scope>
    <scope>MUTAGENESIS OF 138-ARG--ARG-140</scope>
</reference>
<reference evidence="8" key="2">
    <citation type="journal article" date="1998" name="Science">
        <title>Genome sequence of the nematode C. elegans: a platform for investigating biology.</title>
        <authorList>
            <consortium name="The C. elegans sequencing consortium"/>
        </authorList>
    </citation>
    <scope>NUCLEOTIDE SEQUENCE [LARGE SCALE GENOMIC DNA]</scope>
    <source>
        <strain evidence="8">Bristol N2</strain>
    </source>
</reference>
<reference evidence="7" key="3">
    <citation type="journal article" date="2011" name="Dev. Cell">
        <title>Protein phosphatase 2A-SUR-6/B55 regulates centriole duplication in C. elegans by controlling the levels of centriole assembly factors.</title>
        <authorList>
            <person name="Song M.H."/>
            <person name="Liu Y."/>
            <person name="Anderson D.E."/>
            <person name="Jahng W.J."/>
            <person name="O'Connell K.F."/>
        </authorList>
    </citation>
    <scope>INTERACTION WITH LET-92</scope>
    <scope>PHOSPHORYLATION</scope>
    <scope>DEPHOSPHORYLATION BY LET-92</scope>
</reference>
<reference evidence="7" key="4">
    <citation type="journal article" date="2016" name="PLoS Genet.">
        <title>ATX-2, the C. elegans ortholog of human Ataxin-2, regulates centrosome size and microtubule dynamics.</title>
        <authorList>
            <person name="Stubenvoll M.D."/>
            <person name="Medley J.C."/>
            <person name="Irwin M."/>
            <person name="Song M.H."/>
        </authorList>
    </citation>
    <scope>FUNCTION</scope>
    <scope>INTERACTION WITH ATX-2</scope>
    <scope>SUBCELLULAR LOCATION</scope>
    <scope>DOMAIN</scope>
</reference>
<accession>G5EGU9</accession>
<accession>A9P338</accession>
<accession>A9P339</accession>
<accession>G5EEB4</accession>
<proteinExistence type="evidence at protein level"/>
<name>SZY20_CAEEL</name>
<gene>
    <name evidence="10" type="primary">szy-20</name>
    <name evidence="10" type="synonym">pqn-14</name>
    <name evidence="10" type="ORF">C18E9.3</name>
</gene>
<protein>
    <recommendedName>
        <fullName evidence="10">Suppressor of zyg-1 protein 20</fullName>
    </recommendedName>
</protein>
<sequence>MSKENVVADSWDDADADPVKELMDKVEKVKLLQRKEEKKEAFFEKVKAEESSGVVSKLQTEEGLGPSAEEPKRVFLRRPKDGFAASENVIEASPPTSADTEEQPVTNVRSRSHHKLNQKEKQPAPTYEERQAAYQAARNRILGTEYKPDNQEIKEIKFIDRSKSPETLKMTQQNMVEHYGEELSRELMEQPAEIVPPERQYTPDFTQPPPSVSESGGVYNGPPGFQQKQPNFQPTLQQQSLHQQQYLDNQYMMQMNVQIPIQYHNQTQHQFVPHEASAISTTSQNSNGDGQNDQAIYYYQAPTQQPMNYIPYNLPNMAYPPPNFQPQGQLHHQMNAGQLHQIQQQQQQCQQIQHQPPQQHQQVINGQVMNQQNQRNQVNSYPQQNGAGRGQNRQPMMYQMPCNSGPTAKPPPLMNQMQNRCMTNNGQNYQNRNMQQQGQQRSYSSQPQNGQFYQNGNSNQNNPNNGRKQQHQPQQQQNKSGKFGQNRNDMQKNNYQPNLQQPPMSQNPIPFGCPPRNVNAIREQHANNGSPNTGAGILGPHPMMSASQWPALQQNRPQ</sequence>